<protein>
    <recommendedName>
        <fullName>Putative lipase YDL109C</fullName>
        <ecNumber>3.1.-.-</ecNumber>
    </recommendedName>
</protein>
<feature type="chain" id="PRO_0000240859" description="Putative lipase YDL109C">
    <location>
        <begin position="1"/>
        <end position="647"/>
    </location>
</feature>
<feature type="region of interest" description="Disordered" evidence="2">
    <location>
        <begin position="502"/>
        <end position="523"/>
    </location>
</feature>
<feature type="compositionally biased region" description="Basic and acidic residues" evidence="2">
    <location>
        <begin position="513"/>
        <end position="523"/>
    </location>
</feature>
<feature type="active site" description="Charge relay system" evidence="1">
    <location>
        <position position="274"/>
    </location>
</feature>
<keyword id="KW-0378">Hydrolase</keyword>
<keyword id="KW-0442">Lipid degradation</keyword>
<keyword id="KW-0443">Lipid metabolism</keyword>
<keyword id="KW-1185">Reference proteome</keyword>
<accession>Q12103</accession>
<accession>D6VRP1</accession>
<sequence>MEAGRSADEVLYHNQSSVKLGELERYVITYELYQGDSIPADITLDSLWVKIKNTTKLSYKPAYLLGPFILYCDVRAKDYESSYKIICSADKPVFQSNLQAQQKFIAELSLHHIKPRYVWIVDIVSQILFNKETKVTFEIVVGNSKASLKRKIRCNDSLPDKACNILHTGLSVHRLTTADIWKVPRPIDMSQKSHLVILTHGFQSNVSADMEYLMEEIYKAQMNNPNERLVIKGYMKNACETEKGIKFLGVGLANYIIDELYDDSVGKISFIGHSLGGLTQTFAICYIKTKYPYFFKKVEPINFISLASPLLGIATSTPNYVKMSLSMGIIGTTGQELGLKDGNYGDKPLLYLLSEESLISVLARFKRRTLYANAVNDGIVPLYSSSLLFLDYSQLLQKLGGQTTAPCDPLFQPEVSPIGELPNHSDVANDDDGINASSWNTFWKSKENNCDKKSKRLMNASVIKSMKSVLLSPCPDAKFFSDPDARVATIIHDKIYTEKNLPPPSPTLYEGTAAKEGETRKTRKEMEEIIARRWHKGMHWRKVVVLLKPDAHNNIIVRRRFSNAYGWPVVDHLVTAHFQRDDPIASPMQDKQFAEEDINMATGGVEPNKFYSWLTKIEDPSVYHGGIVSTASQLASSWISKHSSVTD</sequence>
<name>YD109_YEAST</name>
<organism>
    <name type="scientific">Saccharomyces cerevisiae (strain ATCC 204508 / S288c)</name>
    <name type="common">Baker's yeast</name>
    <dbReference type="NCBI Taxonomy" id="559292"/>
    <lineage>
        <taxon>Eukaryota</taxon>
        <taxon>Fungi</taxon>
        <taxon>Dikarya</taxon>
        <taxon>Ascomycota</taxon>
        <taxon>Saccharomycotina</taxon>
        <taxon>Saccharomycetes</taxon>
        <taxon>Saccharomycetales</taxon>
        <taxon>Saccharomycetaceae</taxon>
        <taxon>Saccharomyces</taxon>
    </lineage>
</organism>
<reference key="1">
    <citation type="journal article" date="1996" name="Yeast">
        <title>The sequence of a 16,691 bp segment of Saccharomyces cerevisiae chromosome IV identifies the DUN1, PMT1, PMT5, SRP14 and DPR1 genes, and five new open reading frames.</title>
        <authorList>
            <person name="Boskovic J."/>
            <person name="Soler-Mira A."/>
            <person name="Garcia-Cantalejo J.M."/>
            <person name="Ballesta J.P.G."/>
            <person name="Jimenez A."/>
            <person name="Remacha M.A."/>
        </authorList>
    </citation>
    <scope>NUCLEOTIDE SEQUENCE [GENOMIC DNA]</scope>
    <source>
        <strain>ATCC 96604 / S288c / FY1679</strain>
    </source>
</reference>
<reference key="2">
    <citation type="journal article" date="1997" name="Nature">
        <title>The nucleotide sequence of Saccharomyces cerevisiae chromosome IV.</title>
        <authorList>
            <person name="Jacq C."/>
            <person name="Alt-Moerbe J."/>
            <person name="Andre B."/>
            <person name="Arnold W."/>
            <person name="Bahr A."/>
            <person name="Ballesta J.P.G."/>
            <person name="Bargues M."/>
            <person name="Baron L."/>
            <person name="Becker A."/>
            <person name="Biteau N."/>
            <person name="Bloecker H."/>
            <person name="Blugeon C."/>
            <person name="Boskovic J."/>
            <person name="Brandt P."/>
            <person name="Brueckner M."/>
            <person name="Buitrago M.J."/>
            <person name="Coster F."/>
            <person name="Delaveau T."/>
            <person name="del Rey F."/>
            <person name="Dujon B."/>
            <person name="Eide L.G."/>
            <person name="Garcia-Cantalejo J.M."/>
            <person name="Goffeau A."/>
            <person name="Gomez-Peris A."/>
            <person name="Granotier C."/>
            <person name="Hanemann V."/>
            <person name="Hankeln T."/>
            <person name="Hoheisel J.D."/>
            <person name="Jaeger W."/>
            <person name="Jimenez A."/>
            <person name="Jonniaux J.-L."/>
            <person name="Kraemer C."/>
            <person name="Kuester H."/>
            <person name="Laamanen P."/>
            <person name="Legros Y."/>
            <person name="Louis E.J."/>
            <person name="Moeller-Rieker S."/>
            <person name="Monnet A."/>
            <person name="Moro M."/>
            <person name="Mueller-Auer S."/>
            <person name="Nussbaumer B."/>
            <person name="Paricio N."/>
            <person name="Paulin L."/>
            <person name="Perea J."/>
            <person name="Perez-Alonso M."/>
            <person name="Perez-Ortin J.E."/>
            <person name="Pohl T.M."/>
            <person name="Prydz H."/>
            <person name="Purnelle B."/>
            <person name="Rasmussen S.W."/>
            <person name="Remacha M.A."/>
            <person name="Revuelta J.L."/>
            <person name="Rieger M."/>
            <person name="Salom D."/>
            <person name="Saluz H.P."/>
            <person name="Saiz J.E."/>
            <person name="Saren A.-M."/>
            <person name="Schaefer M."/>
            <person name="Scharfe M."/>
            <person name="Schmidt E.R."/>
            <person name="Schneider C."/>
            <person name="Scholler P."/>
            <person name="Schwarz S."/>
            <person name="Soler-Mira A."/>
            <person name="Urrestarazu L.A."/>
            <person name="Verhasselt P."/>
            <person name="Vissers S."/>
            <person name="Voet M."/>
            <person name="Volckaert G."/>
            <person name="Wagner G."/>
            <person name="Wambutt R."/>
            <person name="Wedler E."/>
            <person name="Wedler H."/>
            <person name="Woelfl S."/>
            <person name="Harris D.E."/>
            <person name="Bowman S."/>
            <person name="Brown D."/>
            <person name="Churcher C.M."/>
            <person name="Connor R."/>
            <person name="Dedman K."/>
            <person name="Gentles S."/>
            <person name="Hamlin N."/>
            <person name="Hunt S."/>
            <person name="Jones L."/>
            <person name="McDonald S."/>
            <person name="Murphy L.D."/>
            <person name="Niblett D."/>
            <person name="Odell C."/>
            <person name="Oliver K."/>
            <person name="Rajandream M.A."/>
            <person name="Richards C."/>
            <person name="Shore L."/>
            <person name="Walsh S.V."/>
            <person name="Barrell B.G."/>
            <person name="Dietrich F.S."/>
            <person name="Mulligan J.T."/>
            <person name="Allen E."/>
            <person name="Araujo R."/>
            <person name="Aviles E."/>
            <person name="Berno A."/>
            <person name="Carpenter J."/>
            <person name="Chen E."/>
            <person name="Cherry J.M."/>
            <person name="Chung E."/>
            <person name="Duncan M."/>
            <person name="Hunicke-Smith S."/>
            <person name="Hyman R.W."/>
            <person name="Komp C."/>
            <person name="Lashkari D."/>
            <person name="Lew H."/>
            <person name="Lin D."/>
            <person name="Mosedale D."/>
            <person name="Nakahara K."/>
            <person name="Namath A."/>
            <person name="Oefner P."/>
            <person name="Oh C."/>
            <person name="Petel F.X."/>
            <person name="Roberts D."/>
            <person name="Schramm S."/>
            <person name="Schroeder M."/>
            <person name="Shogren T."/>
            <person name="Shroff N."/>
            <person name="Winant A."/>
            <person name="Yelton M.A."/>
            <person name="Botstein D."/>
            <person name="Davis R.W."/>
            <person name="Johnston M."/>
            <person name="Andrews S."/>
            <person name="Brinkman R."/>
            <person name="Cooper J."/>
            <person name="Ding H."/>
            <person name="Du Z."/>
            <person name="Favello A."/>
            <person name="Fulton L."/>
            <person name="Gattung S."/>
            <person name="Greco T."/>
            <person name="Hallsworth K."/>
            <person name="Hawkins J."/>
            <person name="Hillier L.W."/>
            <person name="Jier M."/>
            <person name="Johnson D."/>
            <person name="Johnston L."/>
            <person name="Kirsten J."/>
            <person name="Kucaba T."/>
            <person name="Langston Y."/>
            <person name="Latreille P."/>
            <person name="Le T."/>
            <person name="Mardis E."/>
            <person name="Menezes S."/>
            <person name="Miller N."/>
            <person name="Nhan M."/>
            <person name="Pauley A."/>
            <person name="Peluso D."/>
            <person name="Rifkin L."/>
            <person name="Riles L."/>
            <person name="Taich A."/>
            <person name="Trevaskis E."/>
            <person name="Vignati D."/>
            <person name="Wilcox L."/>
            <person name="Wohldman P."/>
            <person name="Vaudin M."/>
            <person name="Wilson R."/>
            <person name="Waterston R."/>
            <person name="Albermann K."/>
            <person name="Hani J."/>
            <person name="Heumann K."/>
            <person name="Kleine K."/>
            <person name="Mewes H.-W."/>
            <person name="Zollner A."/>
            <person name="Zaccaria P."/>
        </authorList>
    </citation>
    <scope>NUCLEOTIDE SEQUENCE [LARGE SCALE GENOMIC DNA]</scope>
    <source>
        <strain>ATCC 204508 / S288c</strain>
    </source>
</reference>
<reference key="3">
    <citation type="journal article" date="2014" name="G3 (Bethesda)">
        <title>The reference genome sequence of Saccharomyces cerevisiae: Then and now.</title>
        <authorList>
            <person name="Engel S.R."/>
            <person name="Dietrich F.S."/>
            <person name="Fisk D.G."/>
            <person name="Binkley G."/>
            <person name="Balakrishnan R."/>
            <person name="Costanzo M.C."/>
            <person name="Dwight S.S."/>
            <person name="Hitz B.C."/>
            <person name="Karra K."/>
            <person name="Nash R.S."/>
            <person name="Weng S."/>
            <person name="Wong E.D."/>
            <person name="Lloyd P."/>
            <person name="Skrzypek M.S."/>
            <person name="Miyasato S.R."/>
            <person name="Simison M."/>
            <person name="Cherry J.M."/>
        </authorList>
    </citation>
    <scope>GENOME REANNOTATION</scope>
    <source>
        <strain>ATCC 204508 / S288c</strain>
    </source>
</reference>
<reference key="4">
    <citation type="journal article" date="1999" name="Yeast">
        <title>Systematic analysis of yeast strains with possible defects in lipid metabolism.</title>
        <authorList>
            <person name="Daum G."/>
            <person name="Tuller G."/>
            <person name="Nemec T."/>
            <person name="Hrastnik C."/>
            <person name="Balliano G."/>
            <person name="Cattel L."/>
            <person name="Milla P."/>
            <person name="Rocco F."/>
            <person name="Conzelmann A."/>
            <person name="Vionnet C."/>
            <person name="Kelly D.E."/>
            <person name="Kelly S."/>
            <person name="Schweizer E."/>
            <person name="Schueller H.-J."/>
            <person name="Hojad U."/>
            <person name="Greiner E."/>
            <person name="Finger K."/>
        </authorList>
    </citation>
    <scope>FUNCTION</scope>
</reference>
<reference key="5">
    <citation type="journal article" date="2003" name="Nature">
        <title>Global analysis of protein expression in yeast.</title>
        <authorList>
            <person name="Ghaemmaghami S."/>
            <person name="Huh W.-K."/>
            <person name="Bower K."/>
            <person name="Howson R.W."/>
            <person name="Belle A."/>
            <person name="Dephoure N."/>
            <person name="O'Shea E.K."/>
            <person name="Weissman J.S."/>
        </authorList>
    </citation>
    <scope>LEVEL OF PROTEIN EXPRESSION [LARGE SCALE ANALYSIS]</scope>
</reference>
<comment type="function">
    <text evidence="3">Involved in lipid metabolism.</text>
</comment>
<comment type="miscellaneous">
    <text evidence="4">Present with 195 molecules/cell in log phase SD medium.</text>
</comment>
<comment type="similarity">
    <text evidence="5">Belongs to the putative lipase ROG1 family.</text>
</comment>
<proteinExistence type="evidence at protein level"/>
<gene>
    <name type="ordered locus">YDL109C</name>
    <name type="ORF">D2325</name>
</gene>
<dbReference type="EC" id="3.1.-.-"/>
<dbReference type="EMBL" id="X95644">
    <property type="protein sequence ID" value="CAA64903.1"/>
    <property type="molecule type" value="Genomic_DNA"/>
</dbReference>
<dbReference type="EMBL" id="Z74157">
    <property type="protein sequence ID" value="CAA98676.1"/>
    <property type="molecule type" value="Genomic_DNA"/>
</dbReference>
<dbReference type="EMBL" id="BK006938">
    <property type="protein sequence ID" value="DAA11751.1"/>
    <property type="molecule type" value="Genomic_DNA"/>
</dbReference>
<dbReference type="PIR" id="S67651">
    <property type="entry name" value="S67651"/>
</dbReference>
<dbReference type="RefSeq" id="NP_010174.1">
    <property type="nucleotide sequence ID" value="NM_001180168.1"/>
</dbReference>
<dbReference type="BioGRID" id="31953">
    <property type="interactions" value="31"/>
</dbReference>
<dbReference type="FunCoup" id="Q12103">
    <property type="interactions" value="18"/>
</dbReference>
<dbReference type="STRING" id="4932.YDL109C"/>
<dbReference type="ESTHER" id="yeast-YDL109C">
    <property type="family name" value="Duf_676"/>
</dbReference>
<dbReference type="iPTMnet" id="Q12103"/>
<dbReference type="PaxDb" id="4932-YDL109C"/>
<dbReference type="PeptideAtlas" id="Q12103"/>
<dbReference type="EnsemblFungi" id="YDL109C_mRNA">
    <property type="protein sequence ID" value="YDL109C"/>
    <property type="gene ID" value="YDL109C"/>
</dbReference>
<dbReference type="GeneID" id="851449"/>
<dbReference type="KEGG" id="sce:YDL109C"/>
<dbReference type="AGR" id="SGD:S000002267"/>
<dbReference type="SGD" id="S000002267">
    <property type="gene designation" value="YDL109C"/>
</dbReference>
<dbReference type="VEuPathDB" id="FungiDB:YDL109C"/>
<dbReference type="eggNOG" id="KOG4372">
    <property type="taxonomic scope" value="Eukaryota"/>
</dbReference>
<dbReference type="GeneTree" id="ENSGT00940000176402"/>
<dbReference type="HOGENOM" id="CLU_007367_1_0_1"/>
<dbReference type="InParanoid" id="Q12103"/>
<dbReference type="OMA" id="CFITADQ"/>
<dbReference type="OrthoDB" id="5368485at2759"/>
<dbReference type="BioCyc" id="YEAST:G3O-29510-MONOMER"/>
<dbReference type="BioGRID-ORCS" id="851449">
    <property type="hits" value="1 hit in 10 CRISPR screens"/>
</dbReference>
<dbReference type="PRO" id="PR:Q12103"/>
<dbReference type="Proteomes" id="UP000002311">
    <property type="component" value="Chromosome IV"/>
</dbReference>
<dbReference type="RNAct" id="Q12103">
    <property type="molecule type" value="protein"/>
</dbReference>
<dbReference type="GO" id="GO:0047372">
    <property type="term" value="F:monoacylglycerol lipase activity"/>
    <property type="evidence" value="ECO:0000318"/>
    <property type="project" value="GO_Central"/>
</dbReference>
<dbReference type="GO" id="GO:0016042">
    <property type="term" value="P:lipid catabolic process"/>
    <property type="evidence" value="ECO:0007669"/>
    <property type="project" value="UniProtKB-KW"/>
</dbReference>
<dbReference type="GO" id="GO:0006629">
    <property type="term" value="P:lipid metabolic process"/>
    <property type="evidence" value="ECO:0000318"/>
    <property type="project" value="GO_Central"/>
</dbReference>
<dbReference type="Gene3D" id="3.40.50.1820">
    <property type="entry name" value="alpha/beta hydrolase"/>
    <property type="match status" value="1"/>
</dbReference>
<dbReference type="InterPro" id="IPR029058">
    <property type="entry name" value="AB_hydrolase_fold"/>
</dbReference>
<dbReference type="InterPro" id="IPR007751">
    <property type="entry name" value="DUF676_lipase-like"/>
</dbReference>
<dbReference type="InterPro" id="IPR044294">
    <property type="entry name" value="Lipase-like"/>
</dbReference>
<dbReference type="InterPro" id="IPR016445">
    <property type="entry name" value="Rog1_fam"/>
</dbReference>
<dbReference type="PANTHER" id="PTHR12482:SF62">
    <property type="entry name" value="LIPASE ROG1-RELATED"/>
    <property type="match status" value="1"/>
</dbReference>
<dbReference type="PANTHER" id="PTHR12482">
    <property type="entry name" value="LIPASE ROG1-RELATED-RELATED"/>
    <property type="match status" value="1"/>
</dbReference>
<dbReference type="Pfam" id="PF05057">
    <property type="entry name" value="DUF676"/>
    <property type="match status" value="1"/>
</dbReference>
<dbReference type="PIRSF" id="PIRSF005412">
    <property type="entry name" value="UCP005412_abhydr"/>
    <property type="match status" value="1"/>
</dbReference>
<dbReference type="SUPFAM" id="SSF53474">
    <property type="entry name" value="alpha/beta-Hydrolases"/>
    <property type="match status" value="1"/>
</dbReference>
<dbReference type="PROSITE" id="PS00120">
    <property type="entry name" value="LIPASE_SER"/>
    <property type="match status" value="1"/>
</dbReference>
<evidence type="ECO:0000255" key="1">
    <source>
        <dbReference type="PROSITE-ProRule" id="PRU10037"/>
    </source>
</evidence>
<evidence type="ECO:0000256" key="2">
    <source>
        <dbReference type="SAM" id="MobiDB-lite"/>
    </source>
</evidence>
<evidence type="ECO:0000269" key="3">
    <source>
    </source>
</evidence>
<evidence type="ECO:0000269" key="4">
    <source>
    </source>
</evidence>
<evidence type="ECO:0000305" key="5"/>